<name>RL4_FRATF</name>
<evidence type="ECO:0000255" key="1">
    <source>
        <dbReference type="HAMAP-Rule" id="MF_01328"/>
    </source>
</evidence>
<evidence type="ECO:0000256" key="2">
    <source>
        <dbReference type="SAM" id="MobiDB-lite"/>
    </source>
</evidence>
<evidence type="ECO:0000305" key="3"/>
<sequence length="207" mass="22553">MDLNIKSLAGQEAGSLGVAEGVFAADYNEALIHQVVVAYMAGARQGTKAQKTRSEVSGGGAKPWRQKGTGRARAGTIRSPIFRKGGVTFAAKPKSYKQKVNRKMYSGAVKSILSELLRSGRMTIVEELKLETPKTREFKSVIDSLGVKDVLFVVGVEEFSENLYLSSRNLKNVAVCDSVEINPVSLVCFENVVLTKKAIKEIEEKLV</sequence>
<protein>
    <recommendedName>
        <fullName evidence="1">Large ribosomal subunit protein uL4</fullName>
    </recommendedName>
    <alternativeName>
        <fullName evidence="3">50S ribosomal protein L4</fullName>
    </alternativeName>
</protein>
<feature type="chain" id="PRO_1000052402" description="Large ribosomal subunit protein uL4">
    <location>
        <begin position="1"/>
        <end position="207"/>
    </location>
</feature>
<feature type="region of interest" description="Disordered" evidence="2">
    <location>
        <begin position="48"/>
        <end position="70"/>
    </location>
</feature>
<dbReference type="EMBL" id="CP000803">
    <property type="protein sequence ID" value="ABU60730.1"/>
    <property type="molecule type" value="Genomic_DNA"/>
</dbReference>
<dbReference type="RefSeq" id="WP_003021600.1">
    <property type="nucleotide sequence ID" value="NC_009749.1"/>
</dbReference>
<dbReference type="SMR" id="A7N9S7"/>
<dbReference type="GeneID" id="75264260"/>
<dbReference type="KEGG" id="fta:FTA_0253"/>
<dbReference type="HOGENOM" id="CLU_041575_5_2_6"/>
<dbReference type="GO" id="GO:1990904">
    <property type="term" value="C:ribonucleoprotein complex"/>
    <property type="evidence" value="ECO:0007669"/>
    <property type="project" value="UniProtKB-KW"/>
</dbReference>
<dbReference type="GO" id="GO:0005840">
    <property type="term" value="C:ribosome"/>
    <property type="evidence" value="ECO:0007669"/>
    <property type="project" value="UniProtKB-KW"/>
</dbReference>
<dbReference type="GO" id="GO:0019843">
    <property type="term" value="F:rRNA binding"/>
    <property type="evidence" value="ECO:0007669"/>
    <property type="project" value="UniProtKB-UniRule"/>
</dbReference>
<dbReference type="GO" id="GO:0003735">
    <property type="term" value="F:structural constituent of ribosome"/>
    <property type="evidence" value="ECO:0007669"/>
    <property type="project" value="InterPro"/>
</dbReference>
<dbReference type="GO" id="GO:0006412">
    <property type="term" value="P:translation"/>
    <property type="evidence" value="ECO:0007669"/>
    <property type="project" value="UniProtKB-UniRule"/>
</dbReference>
<dbReference type="Gene3D" id="3.40.1370.10">
    <property type="match status" value="1"/>
</dbReference>
<dbReference type="HAMAP" id="MF_01328_B">
    <property type="entry name" value="Ribosomal_uL4_B"/>
    <property type="match status" value="1"/>
</dbReference>
<dbReference type="InterPro" id="IPR002136">
    <property type="entry name" value="Ribosomal_uL4"/>
</dbReference>
<dbReference type="InterPro" id="IPR013005">
    <property type="entry name" value="Ribosomal_uL4-like"/>
</dbReference>
<dbReference type="InterPro" id="IPR023574">
    <property type="entry name" value="Ribosomal_uL4_dom_sf"/>
</dbReference>
<dbReference type="NCBIfam" id="TIGR03953">
    <property type="entry name" value="rplD_bact"/>
    <property type="match status" value="1"/>
</dbReference>
<dbReference type="PANTHER" id="PTHR10746">
    <property type="entry name" value="50S RIBOSOMAL PROTEIN L4"/>
    <property type="match status" value="1"/>
</dbReference>
<dbReference type="PANTHER" id="PTHR10746:SF6">
    <property type="entry name" value="LARGE RIBOSOMAL SUBUNIT PROTEIN UL4M"/>
    <property type="match status" value="1"/>
</dbReference>
<dbReference type="Pfam" id="PF00573">
    <property type="entry name" value="Ribosomal_L4"/>
    <property type="match status" value="1"/>
</dbReference>
<dbReference type="SUPFAM" id="SSF52166">
    <property type="entry name" value="Ribosomal protein L4"/>
    <property type="match status" value="1"/>
</dbReference>
<reference key="1">
    <citation type="journal article" date="2009" name="PLoS ONE">
        <title>Complete genome sequence of Francisella tularensis subspecies holarctica FTNF002-00.</title>
        <authorList>
            <person name="Barabote R.D."/>
            <person name="Xie G."/>
            <person name="Brettin T.S."/>
            <person name="Hinrichs S.H."/>
            <person name="Fey P.D."/>
            <person name="Jay J.J."/>
            <person name="Engle J.L."/>
            <person name="Godbole S.D."/>
            <person name="Noronha J.M."/>
            <person name="Scheuermann R.H."/>
            <person name="Zhou L.W."/>
            <person name="Lion C."/>
            <person name="Dempsey M.P."/>
        </authorList>
    </citation>
    <scope>NUCLEOTIDE SEQUENCE [LARGE SCALE GENOMIC DNA]</scope>
    <source>
        <strain>FTNF002-00 / FTA</strain>
    </source>
</reference>
<organism>
    <name type="scientific">Francisella tularensis subsp. holarctica (strain FTNF002-00 / FTA)</name>
    <dbReference type="NCBI Taxonomy" id="458234"/>
    <lineage>
        <taxon>Bacteria</taxon>
        <taxon>Pseudomonadati</taxon>
        <taxon>Pseudomonadota</taxon>
        <taxon>Gammaproteobacteria</taxon>
        <taxon>Thiotrichales</taxon>
        <taxon>Francisellaceae</taxon>
        <taxon>Francisella</taxon>
    </lineage>
</organism>
<proteinExistence type="inferred from homology"/>
<keyword id="KW-0687">Ribonucleoprotein</keyword>
<keyword id="KW-0689">Ribosomal protein</keyword>
<keyword id="KW-0694">RNA-binding</keyword>
<keyword id="KW-0699">rRNA-binding</keyword>
<gene>
    <name evidence="1" type="primary">rplD</name>
    <name type="ordered locus">FTA_0253</name>
</gene>
<accession>A7N9S7</accession>
<comment type="function">
    <text evidence="1">One of the primary rRNA binding proteins, this protein initially binds near the 5'-end of the 23S rRNA. It is important during the early stages of 50S assembly. It makes multiple contacts with different domains of the 23S rRNA in the assembled 50S subunit and ribosome.</text>
</comment>
<comment type="function">
    <text evidence="1">Forms part of the polypeptide exit tunnel.</text>
</comment>
<comment type="subunit">
    <text evidence="1">Part of the 50S ribosomal subunit.</text>
</comment>
<comment type="similarity">
    <text evidence="1">Belongs to the universal ribosomal protein uL4 family.</text>
</comment>